<gene>
    <name evidence="1" type="primary">trpC</name>
    <name type="ordered locus">HNE_1787</name>
</gene>
<protein>
    <recommendedName>
        <fullName evidence="1">Indole-3-glycerol phosphate synthase</fullName>
        <shortName evidence="1">IGPS</shortName>
        <ecNumber evidence="1">4.1.1.48</ecNumber>
    </recommendedName>
</protein>
<organism>
    <name type="scientific">Hyphomonas neptunium (strain ATCC 15444)</name>
    <dbReference type="NCBI Taxonomy" id="228405"/>
    <lineage>
        <taxon>Bacteria</taxon>
        <taxon>Pseudomonadati</taxon>
        <taxon>Pseudomonadota</taxon>
        <taxon>Alphaproteobacteria</taxon>
        <taxon>Hyphomonadales</taxon>
        <taxon>Hyphomonadaceae</taxon>
        <taxon>Hyphomonas</taxon>
    </lineage>
</organism>
<dbReference type="EC" id="4.1.1.48" evidence="1"/>
<dbReference type="EMBL" id="CP000158">
    <property type="protein sequence ID" value="ABI78452.1"/>
    <property type="molecule type" value="Genomic_DNA"/>
</dbReference>
<dbReference type="RefSeq" id="WP_011646791.1">
    <property type="nucleotide sequence ID" value="NC_008358.1"/>
</dbReference>
<dbReference type="SMR" id="Q0C1A2"/>
<dbReference type="STRING" id="228405.HNE_1787"/>
<dbReference type="KEGG" id="hne:HNE_1787"/>
<dbReference type="eggNOG" id="COG0134">
    <property type="taxonomic scope" value="Bacteria"/>
</dbReference>
<dbReference type="HOGENOM" id="CLU_034247_2_0_5"/>
<dbReference type="UniPathway" id="UPA00035">
    <property type="reaction ID" value="UER00043"/>
</dbReference>
<dbReference type="Proteomes" id="UP000001959">
    <property type="component" value="Chromosome"/>
</dbReference>
<dbReference type="GO" id="GO:0004425">
    <property type="term" value="F:indole-3-glycerol-phosphate synthase activity"/>
    <property type="evidence" value="ECO:0007669"/>
    <property type="project" value="UniProtKB-UniRule"/>
</dbReference>
<dbReference type="GO" id="GO:0004640">
    <property type="term" value="F:phosphoribosylanthranilate isomerase activity"/>
    <property type="evidence" value="ECO:0007669"/>
    <property type="project" value="TreeGrafter"/>
</dbReference>
<dbReference type="GO" id="GO:0000162">
    <property type="term" value="P:L-tryptophan biosynthetic process"/>
    <property type="evidence" value="ECO:0007669"/>
    <property type="project" value="UniProtKB-UniRule"/>
</dbReference>
<dbReference type="CDD" id="cd00331">
    <property type="entry name" value="IGPS"/>
    <property type="match status" value="1"/>
</dbReference>
<dbReference type="FunFam" id="3.20.20.70:FF:000024">
    <property type="entry name" value="Indole-3-glycerol phosphate synthase"/>
    <property type="match status" value="1"/>
</dbReference>
<dbReference type="Gene3D" id="3.20.20.70">
    <property type="entry name" value="Aldolase class I"/>
    <property type="match status" value="1"/>
</dbReference>
<dbReference type="HAMAP" id="MF_00134_B">
    <property type="entry name" value="IGPS_B"/>
    <property type="match status" value="1"/>
</dbReference>
<dbReference type="InterPro" id="IPR013785">
    <property type="entry name" value="Aldolase_TIM"/>
</dbReference>
<dbReference type="InterPro" id="IPR045186">
    <property type="entry name" value="Indole-3-glycerol_P_synth"/>
</dbReference>
<dbReference type="InterPro" id="IPR013798">
    <property type="entry name" value="Indole-3-glycerol_P_synth_dom"/>
</dbReference>
<dbReference type="InterPro" id="IPR001468">
    <property type="entry name" value="Indole-3-GlycerolPSynthase_CS"/>
</dbReference>
<dbReference type="InterPro" id="IPR011060">
    <property type="entry name" value="RibuloseP-bd_barrel"/>
</dbReference>
<dbReference type="NCBIfam" id="NF001377">
    <property type="entry name" value="PRK00278.2-4"/>
    <property type="match status" value="1"/>
</dbReference>
<dbReference type="PANTHER" id="PTHR22854:SF2">
    <property type="entry name" value="INDOLE-3-GLYCEROL-PHOSPHATE SYNTHASE"/>
    <property type="match status" value="1"/>
</dbReference>
<dbReference type="PANTHER" id="PTHR22854">
    <property type="entry name" value="TRYPTOPHAN BIOSYNTHESIS PROTEIN"/>
    <property type="match status" value="1"/>
</dbReference>
<dbReference type="Pfam" id="PF00218">
    <property type="entry name" value="IGPS"/>
    <property type="match status" value="1"/>
</dbReference>
<dbReference type="SUPFAM" id="SSF51366">
    <property type="entry name" value="Ribulose-phoshate binding barrel"/>
    <property type="match status" value="1"/>
</dbReference>
<dbReference type="PROSITE" id="PS00614">
    <property type="entry name" value="IGPS"/>
    <property type="match status" value="1"/>
</dbReference>
<feature type="chain" id="PRO_1000018485" description="Indole-3-glycerol phosphate synthase">
    <location>
        <begin position="1"/>
        <end position="265"/>
    </location>
</feature>
<proteinExistence type="inferred from homology"/>
<evidence type="ECO:0000255" key="1">
    <source>
        <dbReference type="HAMAP-Rule" id="MF_00134"/>
    </source>
</evidence>
<comment type="catalytic activity">
    <reaction evidence="1">
        <text>1-(2-carboxyphenylamino)-1-deoxy-D-ribulose 5-phosphate + H(+) = (1S,2R)-1-C-(indol-3-yl)glycerol 3-phosphate + CO2 + H2O</text>
        <dbReference type="Rhea" id="RHEA:23476"/>
        <dbReference type="ChEBI" id="CHEBI:15377"/>
        <dbReference type="ChEBI" id="CHEBI:15378"/>
        <dbReference type="ChEBI" id="CHEBI:16526"/>
        <dbReference type="ChEBI" id="CHEBI:58613"/>
        <dbReference type="ChEBI" id="CHEBI:58866"/>
        <dbReference type="EC" id="4.1.1.48"/>
    </reaction>
</comment>
<comment type="pathway">
    <text evidence="1">Amino-acid biosynthesis; L-tryptophan biosynthesis; L-tryptophan from chorismate: step 4/5.</text>
</comment>
<comment type="similarity">
    <text evidence="1">Belongs to the TrpC family.</text>
</comment>
<keyword id="KW-0028">Amino-acid biosynthesis</keyword>
<keyword id="KW-0057">Aromatic amino acid biosynthesis</keyword>
<keyword id="KW-0210">Decarboxylase</keyword>
<keyword id="KW-0456">Lyase</keyword>
<keyword id="KW-1185">Reference proteome</keyword>
<keyword id="KW-0822">Tryptophan biosynthesis</keyword>
<name>TRPC_HYPNA</name>
<sequence>MKTALDRIIDYKRDEVRALKKDRSLGELENAAAAASPVRGFGSALSAIADADQNALICEIKRKSPSAGDILPGADPVEIALDYERGGAACLSVLTDMPSFGGSLADFETIRAAVSIPMLRKDFMIDPIQIIEARAHGADCILIIMSAIDDTLAGELHDCASRLGMDVLVETHDEAEMERALRLPSPLIGVNNRDLKKMVTDLGTTERLAPMLSSDRQLIAESGIADPESIIRLRKVGSRRFLIGEWLMKQGTSRAEQVTRLKLAC</sequence>
<accession>Q0C1A2</accession>
<reference key="1">
    <citation type="journal article" date="2006" name="J. Bacteriol.">
        <title>Comparative genomic evidence for a close relationship between the dimorphic prosthecate bacteria Hyphomonas neptunium and Caulobacter crescentus.</title>
        <authorList>
            <person name="Badger J.H."/>
            <person name="Hoover T.R."/>
            <person name="Brun Y.V."/>
            <person name="Weiner R.M."/>
            <person name="Laub M.T."/>
            <person name="Alexandre G."/>
            <person name="Mrazek J."/>
            <person name="Ren Q."/>
            <person name="Paulsen I.T."/>
            <person name="Nelson K.E."/>
            <person name="Khouri H.M."/>
            <person name="Radune D."/>
            <person name="Sosa J."/>
            <person name="Dodson R.J."/>
            <person name="Sullivan S.A."/>
            <person name="Rosovitz M.J."/>
            <person name="Madupu R."/>
            <person name="Brinkac L.M."/>
            <person name="Durkin A.S."/>
            <person name="Daugherty S.C."/>
            <person name="Kothari S.P."/>
            <person name="Giglio M.G."/>
            <person name="Zhou L."/>
            <person name="Haft D.H."/>
            <person name="Selengut J.D."/>
            <person name="Davidsen T.M."/>
            <person name="Yang Q."/>
            <person name="Zafar N."/>
            <person name="Ward N.L."/>
        </authorList>
    </citation>
    <scope>NUCLEOTIDE SEQUENCE [LARGE SCALE GENOMIC DNA]</scope>
    <source>
        <strain>ATCC 15444</strain>
    </source>
</reference>